<name>CHLB_PROMT</name>
<sequence length="525" mass="58754">MELTLWTYEGPPHIGAMRIATSMKKLHYVLHAPQGDTYADLLFTMIERRGSRPPVTYTTFQARDLGGDTAELVKGHIKEAVDRFKPETLLVGESCTAELIQDQPGSLAKGMGFDIPIVSLELPAYSKKENWGGSETFYQIVRTLLKDHSNESKHTWQEEKRRPRVNLLGPTLLGFRCRDDVLEIQKLLGQYGIDVNVVAPLGASPADILRIPNADVNVCLYPEIAESTCIWLERNLNIPFTTTVPLGVGATQDFLKELHKVLEMEIPQSVNESNNSKLTWYSNSVDSNYLTGKRVFIFGDGTHALAAARIANEELGFKVVGLGTYSREMARKVRPAAKALGLEALITNDYLEVEDAIKETSPELVLGTQMERHSAKRLGIPCAVISTPMHVQDVPARYSPQMGWEGANVIFDDWVHPLMMGLEEHLIGMFKHDFEFVDGHQSHLGHLGGKGTQNTNKEAIKTNLQDSVITDSDPIWTHEGEKELSKIPFFVRGKVRRNTENYARQAGCREINEETLYDAKAHYKA</sequence>
<gene>
    <name evidence="1" type="primary">chlB</name>
    <name type="ordered locus">PMN2A_1874</name>
</gene>
<dbReference type="EC" id="1.3.7.7" evidence="1"/>
<dbReference type="EMBL" id="CP000095">
    <property type="protein sequence ID" value="AAZ59362.1"/>
    <property type="molecule type" value="Genomic_DNA"/>
</dbReference>
<dbReference type="RefSeq" id="WP_011294506.1">
    <property type="nucleotide sequence ID" value="NC_007335.2"/>
</dbReference>
<dbReference type="SMR" id="Q46GN4"/>
<dbReference type="STRING" id="59920.PMN2A_1874"/>
<dbReference type="KEGG" id="pmn:PMN2A_1874"/>
<dbReference type="HOGENOM" id="CLU_025470_0_0_3"/>
<dbReference type="OrthoDB" id="5717231at2"/>
<dbReference type="PhylomeDB" id="Q46GN4"/>
<dbReference type="UniPathway" id="UPA00670"/>
<dbReference type="Proteomes" id="UP000002535">
    <property type="component" value="Chromosome"/>
</dbReference>
<dbReference type="GO" id="GO:0051539">
    <property type="term" value="F:4 iron, 4 sulfur cluster binding"/>
    <property type="evidence" value="ECO:0007669"/>
    <property type="project" value="UniProtKB-UniRule"/>
</dbReference>
<dbReference type="GO" id="GO:0005524">
    <property type="term" value="F:ATP binding"/>
    <property type="evidence" value="ECO:0007669"/>
    <property type="project" value="UniProtKB-UniRule"/>
</dbReference>
<dbReference type="GO" id="GO:0046872">
    <property type="term" value="F:metal ion binding"/>
    <property type="evidence" value="ECO:0007669"/>
    <property type="project" value="UniProtKB-KW"/>
</dbReference>
<dbReference type="GO" id="GO:0016730">
    <property type="term" value="F:oxidoreductase activity, acting on iron-sulfur proteins as donors"/>
    <property type="evidence" value="ECO:0007669"/>
    <property type="project" value="InterPro"/>
</dbReference>
<dbReference type="GO" id="GO:0016636">
    <property type="term" value="F:oxidoreductase activity, acting on the CH-CH group of donors, iron-sulfur protein as acceptor"/>
    <property type="evidence" value="ECO:0007669"/>
    <property type="project" value="UniProtKB-UniRule"/>
</dbReference>
<dbReference type="GO" id="GO:0036068">
    <property type="term" value="P:light-independent chlorophyll biosynthetic process"/>
    <property type="evidence" value="ECO:0007669"/>
    <property type="project" value="UniProtKB-UniRule"/>
</dbReference>
<dbReference type="GO" id="GO:0019685">
    <property type="term" value="P:photosynthesis, dark reaction"/>
    <property type="evidence" value="ECO:0007669"/>
    <property type="project" value="InterPro"/>
</dbReference>
<dbReference type="Gene3D" id="1.20.89.20">
    <property type="match status" value="1"/>
</dbReference>
<dbReference type="Gene3D" id="3.40.50.1980">
    <property type="entry name" value="Nitrogenase molybdenum iron protein domain"/>
    <property type="match status" value="3"/>
</dbReference>
<dbReference type="Gene3D" id="1.10.8.550">
    <property type="entry name" value="Proto-chlorophyllide reductase 57 kD subunit B"/>
    <property type="match status" value="1"/>
</dbReference>
<dbReference type="HAMAP" id="MF_00353">
    <property type="entry name" value="ChlB_BchB"/>
    <property type="match status" value="1"/>
</dbReference>
<dbReference type="InterPro" id="IPR050152">
    <property type="entry name" value="ChlB/BchB/BchZ"/>
</dbReference>
<dbReference type="InterPro" id="IPR013580">
    <property type="entry name" value="LI-POR_suB-like_C"/>
</dbReference>
<dbReference type="InterPro" id="IPR000510">
    <property type="entry name" value="Nase/OxRdtase_comp1"/>
</dbReference>
<dbReference type="InterPro" id="IPR042298">
    <property type="entry name" value="P-CP_red_C"/>
</dbReference>
<dbReference type="InterPro" id="IPR005969">
    <property type="entry name" value="Protochl_reductB"/>
</dbReference>
<dbReference type="InterPro" id="IPR016209">
    <property type="entry name" value="Protochlorophyllide_Rdtase"/>
</dbReference>
<dbReference type="NCBIfam" id="TIGR01278">
    <property type="entry name" value="DPOR_BchB"/>
    <property type="match status" value="1"/>
</dbReference>
<dbReference type="NCBIfam" id="NF002790">
    <property type="entry name" value="PRK02910.1-4"/>
    <property type="match status" value="1"/>
</dbReference>
<dbReference type="PANTHER" id="PTHR33712">
    <property type="entry name" value="LIGHT-INDEPENDENT PROTOCHLOROPHYLLIDE REDUCTASE SUBUNIT B"/>
    <property type="match status" value="1"/>
</dbReference>
<dbReference type="PANTHER" id="PTHR33712:SF7">
    <property type="entry name" value="LIGHT-INDEPENDENT PROTOCHLOROPHYLLIDE REDUCTASE SUBUNIT B"/>
    <property type="match status" value="1"/>
</dbReference>
<dbReference type="Pfam" id="PF00148">
    <property type="entry name" value="Oxidored_nitro"/>
    <property type="match status" value="1"/>
</dbReference>
<dbReference type="Pfam" id="PF08369">
    <property type="entry name" value="PCP_red"/>
    <property type="match status" value="1"/>
</dbReference>
<dbReference type="PIRSF" id="PIRSF000163">
    <property type="entry name" value="PCP_ChlB"/>
    <property type="match status" value="1"/>
</dbReference>
<dbReference type="SUPFAM" id="SSF53807">
    <property type="entry name" value="Helical backbone' metal receptor"/>
    <property type="match status" value="1"/>
</dbReference>
<comment type="function">
    <text evidence="1">Component of the dark-operative protochlorophyllide reductase (DPOR) that uses Mg-ATP and reduced ferredoxin to reduce ring D of protochlorophyllide (Pchlide) to form chlorophyllide a (Chlide). This reaction is light-independent. The NB-protein (ChlN-ChlB) is the catalytic component of the complex.</text>
</comment>
<comment type="catalytic activity">
    <reaction evidence="1">
        <text>chlorophyllide a + oxidized 2[4Fe-4S]-[ferredoxin] + 2 ADP + 2 phosphate = protochlorophyllide a + reduced 2[4Fe-4S]-[ferredoxin] + 2 ATP + 2 H2O</text>
        <dbReference type="Rhea" id="RHEA:28202"/>
        <dbReference type="Rhea" id="RHEA-COMP:10002"/>
        <dbReference type="Rhea" id="RHEA-COMP:10004"/>
        <dbReference type="ChEBI" id="CHEBI:15377"/>
        <dbReference type="ChEBI" id="CHEBI:30616"/>
        <dbReference type="ChEBI" id="CHEBI:33722"/>
        <dbReference type="ChEBI" id="CHEBI:33723"/>
        <dbReference type="ChEBI" id="CHEBI:43474"/>
        <dbReference type="ChEBI" id="CHEBI:83348"/>
        <dbReference type="ChEBI" id="CHEBI:83350"/>
        <dbReference type="ChEBI" id="CHEBI:456216"/>
        <dbReference type="EC" id="1.3.7.7"/>
    </reaction>
</comment>
<comment type="cofactor">
    <cofactor evidence="1">
        <name>[4Fe-4S] cluster</name>
        <dbReference type="ChEBI" id="CHEBI:49883"/>
    </cofactor>
    <text evidence="1">Binds 1 [4Fe-4S] cluster per heterodimer. The cluster is bound at the heterodimer interface by residues from both subunits.</text>
</comment>
<comment type="pathway">
    <text evidence="1">Porphyrin-containing compound metabolism; chlorophyll biosynthesis (light-independent).</text>
</comment>
<comment type="subunit">
    <text evidence="1">Protochlorophyllide reductase is composed of three subunits; ChlL, ChlN and ChlB. Forms a heterotetramer of two ChlB and two ChlN subunits.</text>
</comment>
<comment type="similarity">
    <text evidence="1">Belongs to the ChlB/BchB/BchZ family.</text>
</comment>
<proteinExistence type="inferred from homology"/>
<reference key="1">
    <citation type="journal article" date="2007" name="PLoS Genet.">
        <title>Patterns and implications of gene gain and loss in the evolution of Prochlorococcus.</title>
        <authorList>
            <person name="Kettler G.C."/>
            <person name="Martiny A.C."/>
            <person name="Huang K."/>
            <person name="Zucker J."/>
            <person name="Coleman M.L."/>
            <person name="Rodrigue S."/>
            <person name="Chen F."/>
            <person name="Lapidus A."/>
            <person name="Ferriera S."/>
            <person name="Johnson J."/>
            <person name="Steglich C."/>
            <person name="Church G.M."/>
            <person name="Richardson P."/>
            <person name="Chisholm S.W."/>
        </authorList>
    </citation>
    <scope>NUCLEOTIDE SEQUENCE [LARGE SCALE GENOMIC DNA]</scope>
    <source>
        <strain>NATL2A</strain>
    </source>
</reference>
<protein>
    <recommendedName>
        <fullName evidence="1">Light-independent protochlorophyllide reductase subunit B</fullName>
        <shortName evidence="1">DPOR subunit B</shortName>
        <shortName evidence="1">LI-POR subunit B</shortName>
        <ecNumber evidence="1">1.3.7.7</ecNumber>
    </recommendedName>
</protein>
<feature type="chain" id="PRO_1000048415" description="Light-independent protochlorophyllide reductase subunit B">
    <location>
        <begin position="1"/>
        <end position="525"/>
    </location>
</feature>
<feature type="active site" description="Proton donor" evidence="1">
    <location>
        <position position="286"/>
    </location>
</feature>
<feature type="binding site" evidence="1">
    <location>
        <position position="36"/>
    </location>
    <ligand>
        <name>[4Fe-4S] cluster</name>
        <dbReference type="ChEBI" id="CHEBI:49883"/>
        <note>ligand shared with heterodimeric partner</note>
    </ligand>
</feature>
<feature type="binding site" evidence="1">
    <location>
        <begin position="421"/>
        <end position="422"/>
    </location>
    <ligand>
        <name>substrate</name>
    </ligand>
</feature>
<organism>
    <name type="scientific">Prochlorococcus marinus (strain NATL2A)</name>
    <dbReference type="NCBI Taxonomy" id="59920"/>
    <lineage>
        <taxon>Bacteria</taxon>
        <taxon>Bacillati</taxon>
        <taxon>Cyanobacteriota</taxon>
        <taxon>Cyanophyceae</taxon>
        <taxon>Synechococcales</taxon>
        <taxon>Prochlorococcaceae</taxon>
        <taxon>Prochlorococcus</taxon>
    </lineage>
</organism>
<keyword id="KW-0004">4Fe-4S</keyword>
<keyword id="KW-0067">ATP-binding</keyword>
<keyword id="KW-0149">Chlorophyll biosynthesis</keyword>
<keyword id="KW-0408">Iron</keyword>
<keyword id="KW-0411">Iron-sulfur</keyword>
<keyword id="KW-0479">Metal-binding</keyword>
<keyword id="KW-0547">Nucleotide-binding</keyword>
<keyword id="KW-0560">Oxidoreductase</keyword>
<keyword id="KW-0602">Photosynthesis</keyword>
<keyword id="KW-1185">Reference proteome</keyword>
<evidence type="ECO:0000255" key="1">
    <source>
        <dbReference type="HAMAP-Rule" id="MF_00353"/>
    </source>
</evidence>
<accession>Q46GN4</accession>